<reference key="1">
    <citation type="submission" date="2008-01" db="EMBL/GenBank/DDBJ databases">
        <title>Complete sequence of Pseudomonas putida GB-1.</title>
        <authorList>
            <consortium name="US DOE Joint Genome Institute"/>
            <person name="Copeland A."/>
            <person name="Lucas S."/>
            <person name="Lapidus A."/>
            <person name="Barry K."/>
            <person name="Glavina del Rio T."/>
            <person name="Dalin E."/>
            <person name="Tice H."/>
            <person name="Pitluck S."/>
            <person name="Bruce D."/>
            <person name="Goodwin L."/>
            <person name="Chertkov O."/>
            <person name="Brettin T."/>
            <person name="Detter J.C."/>
            <person name="Han C."/>
            <person name="Kuske C.R."/>
            <person name="Schmutz J."/>
            <person name="Larimer F."/>
            <person name="Land M."/>
            <person name="Hauser L."/>
            <person name="Kyrpides N."/>
            <person name="Kim E."/>
            <person name="McCarthy J.K."/>
            <person name="Richardson P."/>
        </authorList>
    </citation>
    <scope>NUCLEOTIDE SEQUENCE [LARGE SCALE GENOMIC DNA]</scope>
    <source>
        <strain>GB-1</strain>
    </source>
</reference>
<feature type="chain" id="PRO_1000084759" description="tRNA pseudouridine synthase D">
    <location>
        <begin position="1"/>
        <end position="352"/>
    </location>
</feature>
<feature type="domain" description="TRUD" evidence="1">
    <location>
        <begin position="157"/>
        <end position="303"/>
    </location>
</feature>
<feature type="active site" description="Nucleophile" evidence="1">
    <location>
        <position position="81"/>
    </location>
</feature>
<comment type="function">
    <text evidence="1">Responsible for synthesis of pseudouridine from uracil-13 in transfer RNAs.</text>
</comment>
<comment type="catalytic activity">
    <reaction evidence="1">
        <text>uridine(13) in tRNA = pseudouridine(13) in tRNA</text>
        <dbReference type="Rhea" id="RHEA:42540"/>
        <dbReference type="Rhea" id="RHEA-COMP:10105"/>
        <dbReference type="Rhea" id="RHEA-COMP:10106"/>
        <dbReference type="ChEBI" id="CHEBI:65314"/>
        <dbReference type="ChEBI" id="CHEBI:65315"/>
        <dbReference type="EC" id="5.4.99.27"/>
    </reaction>
</comment>
<comment type="similarity">
    <text evidence="1">Belongs to the pseudouridine synthase TruD family.</text>
</comment>
<proteinExistence type="inferred from homology"/>
<keyword id="KW-0413">Isomerase</keyword>
<keyword id="KW-0819">tRNA processing</keyword>
<accession>B0KSC6</accession>
<organism>
    <name type="scientific">Pseudomonas putida (strain GB-1)</name>
    <dbReference type="NCBI Taxonomy" id="76869"/>
    <lineage>
        <taxon>Bacteria</taxon>
        <taxon>Pseudomonadati</taxon>
        <taxon>Pseudomonadota</taxon>
        <taxon>Gammaproteobacteria</taxon>
        <taxon>Pseudomonadales</taxon>
        <taxon>Pseudomonadaceae</taxon>
        <taxon>Pseudomonas</taxon>
    </lineage>
</organism>
<gene>
    <name evidence="1" type="primary">truD</name>
    <name type="ordered locus">PputGB1_1173</name>
</gene>
<sequence length="352" mass="38415">MTELELLGPRASGEPLGTAVLKAVAEDFQVDEVLDIPLSGQGEHLWLWVEKRDLNTEEAARRLARAAGVPVRSISYAGLKDRQALTRQWFSLHLPGKADPDLSRAEDASLRVLKQVRHLRKLQRGAHSANGFTLRLTALAADHQALDTRLEQLKQNGVPNYFGTQRFGHGGGNVHDALEWAARKALPEQRNVRSRLLSAGRSFLFNQLLAARVADGSWARAQVGDLLAFTDSRSFFPAGEAECADPRLAILDLHPTGPMWGEGASPAGAATAQLENAVGARQPALCQWLAQAGMDHERRILRLPIGGLTWHYPEPDILQLEFVLPAGCFATVVVREVVDLVSAGQTDSPCVF</sequence>
<dbReference type="EC" id="5.4.99.27" evidence="1"/>
<dbReference type="EMBL" id="CP000926">
    <property type="protein sequence ID" value="ABY97081.1"/>
    <property type="molecule type" value="Genomic_DNA"/>
</dbReference>
<dbReference type="RefSeq" id="WP_012270860.1">
    <property type="nucleotide sequence ID" value="NC_010322.1"/>
</dbReference>
<dbReference type="SMR" id="B0KSC6"/>
<dbReference type="KEGG" id="ppg:PputGB1_1173"/>
<dbReference type="eggNOG" id="COG0585">
    <property type="taxonomic scope" value="Bacteria"/>
</dbReference>
<dbReference type="HOGENOM" id="CLU_005281_4_0_6"/>
<dbReference type="Proteomes" id="UP000002157">
    <property type="component" value="Chromosome"/>
</dbReference>
<dbReference type="GO" id="GO:0005829">
    <property type="term" value="C:cytosol"/>
    <property type="evidence" value="ECO:0007669"/>
    <property type="project" value="TreeGrafter"/>
</dbReference>
<dbReference type="GO" id="GO:0003723">
    <property type="term" value="F:RNA binding"/>
    <property type="evidence" value="ECO:0007669"/>
    <property type="project" value="InterPro"/>
</dbReference>
<dbReference type="GO" id="GO:0160150">
    <property type="term" value="F:tRNA pseudouridine(13) synthase activity"/>
    <property type="evidence" value="ECO:0007669"/>
    <property type="project" value="UniProtKB-EC"/>
</dbReference>
<dbReference type="GO" id="GO:0031119">
    <property type="term" value="P:tRNA pseudouridine synthesis"/>
    <property type="evidence" value="ECO:0007669"/>
    <property type="project" value="UniProtKB-UniRule"/>
</dbReference>
<dbReference type="CDD" id="cd02575">
    <property type="entry name" value="PseudoU_synth_EcTruD"/>
    <property type="match status" value="1"/>
</dbReference>
<dbReference type="Gene3D" id="3.30.2350.20">
    <property type="entry name" value="TruD, catalytic domain"/>
    <property type="match status" value="1"/>
</dbReference>
<dbReference type="Gene3D" id="3.30.2340.10">
    <property type="entry name" value="TruD, insertion domain"/>
    <property type="match status" value="1"/>
</dbReference>
<dbReference type="HAMAP" id="MF_01082">
    <property type="entry name" value="TruD"/>
    <property type="match status" value="1"/>
</dbReference>
<dbReference type="InterPro" id="IPR020103">
    <property type="entry name" value="PsdUridine_synth_cat_dom_sf"/>
</dbReference>
<dbReference type="InterPro" id="IPR001656">
    <property type="entry name" value="PsdUridine_synth_TruD"/>
</dbReference>
<dbReference type="InterPro" id="IPR020119">
    <property type="entry name" value="PsdUridine_synth_TruD_CS"/>
</dbReference>
<dbReference type="InterPro" id="IPR011760">
    <property type="entry name" value="PsdUridine_synth_TruD_insert"/>
</dbReference>
<dbReference type="InterPro" id="IPR042214">
    <property type="entry name" value="TruD_catalytic"/>
</dbReference>
<dbReference type="InterPro" id="IPR043165">
    <property type="entry name" value="TruD_insert_sf"/>
</dbReference>
<dbReference type="InterPro" id="IPR050170">
    <property type="entry name" value="TruD_pseudoU_synthase"/>
</dbReference>
<dbReference type="NCBIfam" id="NF002153">
    <property type="entry name" value="PRK00984.1-2"/>
    <property type="match status" value="1"/>
</dbReference>
<dbReference type="PANTHER" id="PTHR47811">
    <property type="entry name" value="TRNA PSEUDOURIDINE SYNTHASE D"/>
    <property type="match status" value="1"/>
</dbReference>
<dbReference type="PANTHER" id="PTHR47811:SF1">
    <property type="entry name" value="TRNA PSEUDOURIDINE SYNTHASE D"/>
    <property type="match status" value="1"/>
</dbReference>
<dbReference type="Pfam" id="PF01142">
    <property type="entry name" value="TruD"/>
    <property type="match status" value="2"/>
</dbReference>
<dbReference type="SUPFAM" id="SSF55120">
    <property type="entry name" value="Pseudouridine synthase"/>
    <property type="match status" value="1"/>
</dbReference>
<dbReference type="PROSITE" id="PS50984">
    <property type="entry name" value="TRUD"/>
    <property type="match status" value="1"/>
</dbReference>
<dbReference type="PROSITE" id="PS01268">
    <property type="entry name" value="UPF0024"/>
    <property type="match status" value="1"/>
</dbReference>
<evidence type="ECO:0000255" key="1">
    <source>
        <dbReference type="HAMAP-Rule" id="MF_01082"/>
    </source>
</evidence>
<name>TRUD_PSEPG</name>
<protein>
    <recommendedName>
        <fullName evidence="1">tRNA pseudouridine synthase D</fullName>
        <ecNumber evidence="1">5.4.99.27</ecNumber>
    </recommendedName>
    <alternativeName>
        <fullName evidence="1">tRNA pseudouridine(13) synthase</fullName>
    </alternativeName>
    <alternativeName>
        <fullName evidence="1">tRNA pseudouridylate synthase D</fullName>
    </alternativeName>
    <alternativeName>
        <fullName evidence="1">tRNA-uridine isomerase D</fullName>
    </alternativeName>
</protein>